<accession>Q7SH92</accession>
<proteinExistence type="inferred from homology"/>
<keyword id="KW-0963">Cytoplasm</keyword>
<keyword id="KW-0333">Golgi apparatus</keyword>
<keyword id="KW-0446">Lipid-binding</keyword>
<keyword id="KW-0472">Membrane</keyword>
<keyword id="KW-0653">Protein transport</keyword>
<keyword id="KW-1185">Reference proteome</keyword>
<keyword id="KW-0813">Transport</keyword>
<comment type="function">
    <text evidence="1">Required for retention of late Golgi membrane proteins. Component of the retrieval machinery that functions by direct interaction with the cytosolic tails of certain TGN membrane proteins during the sorting/budding process at the prevacuolar compartment. Binds phosphatidylinositol 3-phosphate (PtdIns(P3)) (By similarity).</text>
</comment>
<comment type="subcellular location">
    <subcellularLocation>
        <location evidence="1">Cytoplasm</location>
    </subcellularLocation>
    <subcellularLocation>
        <location evidence="3">Golgi apparatus membrane</location>
        <topology evidence="3">Peripheral membrane protein</topology>
        <orientation evidence="3">Cytoplasmic side</orientation>
    </subcellularLocation>
    <subcellularLocation>
        <location evidence="3">Prevacuolar compartment membrane</location>
        <topology evidence="3">Peripheral membrane protein</topology>
        <orientation evidence="3">Cytoplasmic side</orientation>
    </subcellularLocation>
</comment>
<comment type="domain">
    <text evidence="1">The PX domain binds phosphatidylinositol 3-phosphate which is necessary for peripheral membrane localization.</text>
</comment>
<comment type="similarity">
    <text evidence="3">Belongs to the sorting nexin family.</text>
</comment>
<gene>
    <name type="primary">snx-3</name>
    <name type="ORF">NCU01914</name>
</gene>
<feature type="chain" id="PRO_0000238589" description="Sorting nexin-3">
    <location>
        <begin position="1"/>
        <end position="142"/>
    </location>
</feature>
<feature type="domain" description="PX" evidence="2">
    <location>
        <begin position="21"/>
        <end position="138"/>
    </location>
</feature>
<feature type="binding site" evidence="1">
    <location>
        <position position="64"/>
    </location>
    <ligand>
        <name>a 1,2-diacyl-sn-glycero-3-phospho-(1D-myo-inositol-3-phosphate)</name>
        <dbReference type="ChEBI" id="CHEBI:58088"/>
    </ligand>
</feature>
<feature type="binding site" evidence="1">
    <location>
        <position position="66"/>
    </location>
    <ligand>
        <name>a 1,2-diacyl-sn-glycero-3-phospho-(1D-myo-inositol-3-phosphate)</name>
        <dbReference type="ChEBI" id="CHEBI:58088"/>
    </ligand>
</feature>
<feature type="binding site" evidence="1">
    <location>
        <position position="90"/>
    </location>
    <ligand>
        <name>a 1,2-diacyl-sn-glycero-3-phospho-(1D-myo-inositol-3-phosphate)</name>
        <dbReference type="ChEBI" id="CHEBI:58088"/>
    </ligand>
</feature>
<feature type="binding site" evidence="1">
    <location>
        <position position="95"/>
    </location>
    <ligand>
        <name>a 1,2-diacyl-sn-glycero-3-phospho-(1D-myo-inositol-3-phosphate)</name>
        <dbReference type="ChEBI" id="CHEBI:58088"/>
    </ligand>
</feature>
<feature type="binding site" evidence="1">
    <location>
        <position position="104"/>
    </location>
    <ligand>
        <name>a 1,2-diacyl-sn-glycero-3-phospho-(1D-myo-inositol-3-phosphate)</name>
        <dbReference type="ChEBI" id="CHEBI:58088"/>
    </ligand>
</feature>
<dbReference type="EMBL" id="CM002236">
    <property type="protein sequence ID" value="EAA36309.1"/>
    <property type="molecule type" value="Genomic_DNA"/>
</dbReference>
<dbReference type="RefSeq" id="XP_965545.1">
    <property type="nucleotide sequence ID" value="XM_960452.3"/>
</dbReference>
<dbReference type="SMR" id="Q7SH92"/>
<dbReference type="FunCoup" id="Q7SH92">
    <property type="interactions" value="454"/>
</dbReference>
<dbReference type="STRING" id="367110.Q7SH92"/>
<dbReference type="PaxDb" id="5141-EFNCRP00000001165"/>
<dbReference type="EnsemblFungi" id="EAA36309">
    <property type="protein sequence ID" value="EAA36309"/>
    <property type="gene ID" value="NCU01914"/>
</dbReference>
<dbReference type="GeneID" id="3881638"/>
<dbReference type="KEGG" id="ncr:NCU01914"/>
<dbReference type="VEuPathDB" id="FungiDB:NCU01914"/>
<dbReference type="HOGENOM" id="CLU_057172_2_1_1"/>
<dbReference type="InParanoid" id="Q7SH92"/>
<dbReference type="OrthoDB" id="5227681at2759"/>
<dbReference type="Proteomes" id="UP000001805">
    <property type="component" value="Chromosome 1, Linkage Group I"/>
</dbReference>
<dbReference type="GO" id="GO:0031901">
    <property type="term" value="C:early endosome membrane"/>
    <property type="evidence" value="ECO:0000318"/>
    <property type="project" value="GO_Central"/>
</dbReference>
<dbReference type="GO" id="GO:0000139">
    <property type="term" value="C:Golgi membrane"/>
    <property type="evidence" value="ECO:0007669"/>
    <property type="project" value="UniProtKB-SubCell"/>
</dbReference>
<dbReference type="GO" id="GO:0030904">
    <property type="term" value="C:retromer complex"/>
    <property type="evidence" value="ECO:0000318"/>
    <property type="project" value="GO_Central"/>
</dbReference>
<dbReference type="GO" id="GO:0032266">
    <property type="term" value="F:phosphatidylinositol-3-phosphate binding"/>
    <property type="evidence" value="ECO:0000318"/>
    <property type="project" value="GO_Central"/>
</dbReference>
<dbReference type="GO" id="GO:0032456">
    <property type="term" value="P:endocytic recycling"/>
    <property type="evidence" value="ECO:0000318"/>
    <property type="project" value="GO_Central"/>
</dbReference>
<dbReference type="GO" id="GO:0034499">
    <property type="term" value="P:late endosome to Golgi transport"/>
    <property type="evidence" value="ECO:0000318"/>
    <property type="project" value="GO_Central"/>
</dbReference>
<dbReference type="GO" id="GO:0015031">
    <property type="term" value="P:protein transport"/>
    <property type="evidence" value="ECO:0007669"/>
    <property type="project" value="UniProtKB-KW"/>
</dbReference>
<dbReference type="CDD" id="cd07295">
    <property type="entry name" value="PX_Grd19"/>
    <property type="match status" value="1"/>
</dbReference>
<dbReference type="FunFam" id="3.30.1520.10:FF:000030">
    <property type="entry name" value="Sorting nexin-3, variant"/>
    <property type="match status" value="1"/>
</dbReference>
<dbReference type="Gene3D" id="3.30.1520.10">
    <property type="entry name" value="Phox-like domain"/>
    <property type="match status" value="1"/>
</dbReference>
<dbReference type="InterPro" id="IPR001683">
    <property type="entry name" value="PX_dom"/>
</dbReference>
<dbReference type="InterPro" id="IPR036871">
    <property type="entry name" value="PX_dom_sf"/>
</dbReference>
<dbReference type="InterPro" id="IPR042138">
    <property type="entry name" value="PX_Grd19_PX"/>
</dbReference>
<dbReference type="InterPro" id="IPR051074">
    <property type="entry name" value="Sorting_Nexin"/>
</dbReference>
<dbReference type="PANTHER" id="PTHR45963">
    <property type="entry name" value="RE52028P"/>
    <property type="match status" value="1"/>
</dbReference>
<dbReference type="PANTHER" id="PTHR45963:SF2">
    <property type="entry name" value="RE52028P"/>
    <property type="match status" value="1"/>
</dbReference>
<dbReference type="Pfam" id="PF00787">
    <property type="entry name" value="PX"/>
    <property type="match status" value="1"/>
</dbReference>
<dbReference type="SMART" id="SM00312">
    <property type="entry name" value="PX"/>
    <property type="match status" value="1"/>
</dbReference>
<dbReference type="SUPFAM" id="SSF64268">
    <property type="entry name" value="PX domain"/>
    <property type="match status" value="1"/>
</dbReference>
<dbReference type="PROSITE" id="PS50195">
    <property type="entry name" value="PX"/>
    <property type="match status" value="1"/>
</dbReference>
<organism>
    <name type="scientific">Neurospora crassa (strain ATCC 24698 / 74-OR23-1A / CBS 708.71 / DSM 1257 / FGSC 987)</name>
    <dbReference type="NCBI Taxonomy" id="367110"/>
    <lineage>
        <taxon>Eukaryota</taxon>
        <taxon>Fungi</taxon>
        <taxon>Dikarya</taxon>
        <taxon>Ascomycota</taxon>
        <taxon>Pezizomycotina</taxon>
        <taxon>Sordariomycetes</taxon>
        <taxon>Sordariomycetidae</taxon>
        <taxon>Sordariales</taxon>
        <taxon>Sordariaceae</taxon>
        <taxon>Neurospora</taxon>
    </lineage>
</organism>
<sequence length="142" mass="16642">MQSLPDTRQQSFDEIYGPPENFLEIEVRNPRTHGIGRHMYTDYEIVCRTNIPAFKLRQSTVRRRYSDFEYFRDILERESARVTIPPLPGKVFTNRFSDDVIEGRRAGLEKFLKIVVGHPLLQTGSKVLAAFVQDPNWDRNAW</sequence>
<protein>
    <recommendedName>
        <fullName>Sorting nexin-3</fullName>
    </recommendedName>
</protein>
<name>SNX3_NEUCR</name>
<evidence type="ECO:0000250" key="1"/>
<evidence type="ECO:0000255" key="2">
    <source>
        <dbReference type="PROSITE-ProRule" id="PRU00147"/>
    </source>
</evidence>
<evidence type="ECO:0000305" key="3"/>
<reference key="1">
    <citation type="journal article" date="2003" name="Nature">
        <title>The genome sequence of the filamentous fungus Neurospora crassa.</title>
        <authorList>
            <person name="Galagan J.E."/>
            <person name="Calvo S.E."/>
            <person name="Borkovich K.A."/>
            <person name="Selker E.U."/>
            <person name="Read N.D."/>
            <person name="Jaffe D.B."/>
            <person name="FitzHugh W."/>
            <person name="Ma L.-J."/>
            <person name="Smirnov S."/>
            <person name="Purcell S."/>
            <person name="Rehman B."/>
            <person name="Elkins T."/>
            <person name="Engels R."/>
            <person name="Wang S."/>
            <person name="Nielsen C.B."/>
            <person name="Butler J."/>
            <person name="Endrizzi M."/>
            <person name="Qui D."/>
            <person name="Ianakiev P."/>
            <person name="Bell-Pedersen D."/>
            <person name="Nelson M.A."/>
            <person name="Werner-Washburne M."/>
            <person name="Selitrennikoff C.P."/>
            <person name="Kinsey J.A."/>
            <person name="Braun E.L."/>
            <person name="Zelter A."/>
            <person name="Schulte U."/>
            <person name="Kothe G.O."/>
            <person name="Jedd G."/>
            <person name="Mewes H.-W."/>
            <person name="Staben C."/>
            <person name="Marcotte E."/>
            <person name="Greenberg D."/>
            <person name="Roy A."/>
            <person name="Foley K."/>
            <person name="Naylor J."/>
            <person name="Stange-Thomann N."/>
            <person name="Barrett R."/>
            <person name="Gnerre S."/>
            <person name="Kamal M."/>
            <person name="Kamvysselis M."/>
            <person name="Mauceli E.W."/>
            <person name="Bielke C."/>
            <person name="Rudd S."/>
            <person name="Frishman D."/>
            <person name="Krystofova S."/>
            <person name="Rasmussen C."/>
            <person name="Metzenberg R.L."/>
            <person name="Perkins D.D."/>
            <person name="Kroken S."/>
            <person name="Cogoni C."/>
            <person name="Macino G."/>
            <person name="Catcheside D.E.A."/>
            <person name="Li W."/>
            <person name="Pratt R.J."/>
            <person name="Osmani S.A."/>
            <person name="DeSouza C.P.C."/>
            <person name="Glass N.L."/>
            <person name="Orbach M.J."/>
            <person name="Berglund J.A."/>
            <person name="Voelker R."/>
            <person name="Yarden O."/>
            <person name="Plamann M."/>
            <person name="Seiler S."/>
            <person name="Dunlap J.C."/>
            <person name="Radford A."/>
            <person name="Aramayo R."/>
            <person name="Natvig D.O."/>
            <person name="Alex L.A."/>
            <person name="Mannhaupt G."/>
            <person name="Ebbole D.J."/>
            <person name="Freitag M."/>
            <person name="Paulsen I."/>
            <person name="Sachs M.S."/>
            <person name="Lander E.S."/>
            <person name="Nusbaum C."/>
            <person name="Birren B.W."/>
        </authorList>
    </citation>
    <scope>NUCLEOTIDE SEQUENCE [LARGE SCALE GENOMIC DNA]</scope>
    <source>
        <strain>ATCC 24698 / 74-OR23-1A / CBS 708.71 / DSM 1257 / FGSC 987</strain>
    </source>
</reference>